<dbReference type="SMR" id="C0HMA3"/>
<dbReference type="GO" id="GO:0005576">
    <property type="term" value="C:extracellular region"/>
    <property type="evidence" value="ECO:0007669"/>
    <property type="project" value="UniProtKB-SubCell"/>
</dbReference>
<dbReference type="GO" id="GO:0019871">
    <property type="term" value="F:sodium channel inhibitor activity"/>
    <property type="evidence" value="ECO:0007669"/>
    <property type="project" value="InterPro"/>
</dbReference>
<dbReference type="GO" id="GO:0090729">
    <property type="term" value="F:toxin activity"/>
    <property type="evidence" value="ECO:0007669"/>
    <property type="project" value="UniProtKB-KW"/>
</dbReference>
<dbReference type="GO" id="GO:0006952">
    <property type="term" value="P:defense response"/>
    <property type="evidence" value="ECO:0007669"/>
    <property type="project" value="InterPro"/>
</dbReference>
<dbReference type="CDD" id="cd23106">
    <property type="entry name" value="neurotoxins_LC_scorpion"/>
    <property type="match status" value="1"/>
</dbReference>
<dbReference type="FunFam" id="3.30.30.10:FF:000002">
    <property type="entry name" value="Alpha-like toxin BmK-M1"/>
    <property type="match status" value="1"/>
</dbReference>
<dbReference type="Gene3D" id="3.30.30.10">
    <property type="entry name" value="Knottin, scorpion toxin-like"/>
    <property type="match status" value="1"/>
</dbReference>
<dbReference type="InterPro" id="IPR044062">
    <property type="entry name" value="LCN-type_CS_alpha_beta_dom"/>
</dbReference>
<dbReference type="InterPro" id="IPR003614">
    <property type="entry name" value="Scorpion_toxin-like"/>
</dbReference>
<dbReference type="InterPro" id="IPR036574">
    <property type="entry name" value="Scorpion_toxin-like_sf"/>
</dbReference>
<dbReference type="InterPro" id="IPR018218">
    <property type="entry name" value="Scorpion_toxinL"/>
</dbReference>
<dbReference type="PRINTS" id="PR00285">
    <property type="entry name" value="SCORPNTOXIN"/>
</dbReference>
<dbReference type="SMART" id="SM00505">
    <property type="entry name" value="Knot1"/>
    <property type="match status" value="1"/>
</dbReference>
<dbReference type="SUPFAM" id="SSF57095">
    <property type="entry name" value="Scorpion toxin-like"/>
    <property type="match status" value="1"/>
</dbReference>
<dbReference type="PROSITE" id="PS51863">
    <property type="entry name" value="LCN_CSAB"/>
    <property type="match status" value="1"/>
</dbReference>
<keyword id="KW-0027">Amidation</keyword>
<keyword id="KW-0903">Direct protein sequencing</keyword>
<keyword id="KW-1015">Disulfide bond</keyword>
<keyword id="KW-0872">Ion channel impairing toxin</keyword>
<keyword id="KW-0528">Neurotoxin</keyword>
<keyword id="KW-0964">Secreted</keyword>
<keyword id="KW-0800">Toxin</keyword>
<keyword id="KW-0738">Voltage-gated sodium channel impairing toxin</keyword>
<accession>C0HMA3</accession>
<sequence>KEGYLVNHSTGCKYECYKLGDNDYCLRECKQQYGKGAGGYCYAFGCWCTHLYEQAVVWPLPKKTCN</sequence>
<organism>
    <name type="scientific">Centruroides bonito</name>
    <name type="common">Scorpion</name>
    <dbReference type="NCBI Taxonomy" id="3035065"/>
    <lineage>
        <taxon>Eukaryota</taxon>
        <taxon>Metazoa</taxon>
        <taxon>Ecdysozoa</taxon>
        <taxon>Arthropoda</taxon>
        <taxon>Chelicerata</taxon>
        <taxon>Arachnida</taxon>
        <taxon>Scorpiones</taxon>
        <taxon>Buthida</taxon>
        <taxon>Buthoidea</taxon>
        <taxon>Buthidae</taxon>
        <taxon>Centruroides</taxon>
    </lineage>
</organism>
<protein>
    <recommendedName>
        <fullName evidence="5">Beta-toxin Cbo1</fullName>
        <shortName evidence="4">Cbo1</shortName>
    </recommendedName>
</protein>
<evidence type="ECO:0000250" key="1">
    <source>
        <dbReference type="UniProtKB" id="P59897"/>
    </source>
</evidence>
<evidence type="ECO:0000255" key="2">
    <source>
        <dbReference type="PROSITE-ProRule" id="PRU01210"/>
    </source>
</evidence>
<evidence type="ECO:0000269" key="3">
    <source>
    </source>
</evidence>
<evidence type="ECO:0000303" key="4">
    <source>
    </source>
</evidence>
<evidence type="ECO:0000305" key="5"/>
<evidence type="ECO:0000305" key="6">
    <source>
    </source>
</evidence>
<reference evidence="5" key="1">
    <citation type="journal article" date="2024" name="Toxins">
        <title>Characterization of Sodium Channel Peptides Obtained from the Venom of the Scorpion Centruroides bonito.</title>
        <authorList>
            <person name="Restano-Cassulini R."/>
            <person name="Olamendi-Portugal T."/>
            <person name="Riano-Umbarila L."/>
            <person name="Zamudio F.Z."/>
            <person name="Delgado-Prudencio G."/>
            <person name="Becerril B."/>
            <person name="Possani L.D."/>
        </authorList>
    </citation>
    <scope>PROTEIN SEQUENCE</scope>
    <scope>FUNCTION</scope>
    <scope>SUBCELLULAR LOCATION</scope>
    <scope>TISSUE SPECIFICITY</scope>
    <scope>MASS SPECTROMETRY</scope>
    <source>
        <tissue evidence="4">Venom</tissue>
    </source>
</reference>
<proteinExistence type="evidence at protein level"/>
<name>SCX1_CENBO</name>
<feature type="chain" id="PRO_0000461089" description="Beta-toxin Cbo1">
    <location>
        <begin position="1"/>
        <end position="66"/>
    </location>
</feature>
<feature type="domain" description="LCN-type CS-alpha/beta" evidence="2">
    <location>
        <begin position="1"/>
        <end position="66"/>
    </location>
</feature>
<feature type="modified residue" description="Asparagine amide" evidence="1">
    <location>
        <position position="66"/>
    </location>
</feature>
<feature type="disulfide bond" evidence="2">
    <location>
        <begin position="12"/>
        <end position="65"/>
    </location>
</feature>
<feature type="disulfide bond" evidence="2">
    <location>
        <begin position="16"/>
        <end position="41"/>
    </location>
</feature>
<feature type="disulfide bond" evidence="2">
    <location>
        <begin position="25"/>
        <end position="46"/>
    </location>
</feature>
<feature type="disulfide bond" evidence="2">
    <location>
        <begin position="29"/>
        <end position="48"/>
    </location>
</feature>
<comment type="function">
    <text evidence="3">Beta toxins bind voltage-independently at site-4 of sodium channels and shift the voltage of activation toward more negative potentials thereby affecting sodium channel activation and promoting spontaneous and repetitive firing (PubMed:38535792). Is active on the human voltage-gated sodium channel Nav1.6/SCN8A when tested at 200 nM (PubMed:38535792). In vivo, is toxic to mice when intraperitoneally injected (PubMed:38535792).</text>
</comment>
<comment type="subcellular location">
    <subcellularLocation>
        <location evidence="3">Secreted</location>
    </subcellularLocation>
</comment>
<comment type="tissue specificity">
    <text evidence="6">Expressed by the venom gland.</text>
</comment>
<comment type="domain">
    <text evidence="5">Has the structural arrangement of an alpha-helix connected to antiparallel beta-sheets by disulfide bonds (CS-alpha/beta).</text>
</comment>
<comment type="mass spectrometry"/>
<comment type="miscellaneous">
    <text evidence="3">Negative results: does not modify the currents of the human voltage-gated sodium channels Nav1.1/SCN1A, Nav1.2/SCN2A, Nav1.3/SCN3A, Nav1.4/SCN4A, Nav1.5/SCN5A and Nav1.7/SCN9A.</text>
</comment>
<comment type="similarity">
    <text evidence="5">Belongs to the long (4 C-C) scorpion toxin superfamily. Sodium channel inhibitor family. Beta subfamily.</text>
</comment>